<accession>Q5R458</accession>
<gene>
    <name type="primary">RFTN2</name>
</gene>
<dbReference type="EMBL" id="CR861400">
    <property type="protein sequence ID" value="CAH93458.1"/>
    <property type="molecule type" value="mRNA"/>
</dbReference>
<dbReference type="RefSeq" id="NP_001127026.1">
    <property type="nucleotide sequence ID" value="NM_001133554.1"/>
</dbReference>
<dbReference type="FunCoup" id="Q5R458">
    <property type="interactions" value="34"/>
</dbReference>
<dbReference type="GeneID" id="100174051"/>
<dbReference type="KEGG" id="pon:100174051"/>
<dbReference type="CTD" id="130132"/>
<dbReference type="eggNOG" id="ENOG502QVRY">
    <property type="taxonomic scope" value="Eukaryota"/>
</dbReference>
<dbReference type="InParanoid" id="Q5R458"/>
<dbReference type="OrthoDB" id="9942562at2759"/>
<dbReference type="Proteomes" id="UP000001595">
    <property type="component" value="Unplaced"/>
</dbReference>
<dbReference type="GO" id="GO:0005886">
    <property type="term" value="C:plasma membrane"/>
    <property type="evidence" value="ECO:0007669"/>
    <property type="project" value="UniProtKB-SubCell"/>
</dbReference>
<dbReference type="InterPro" id="IPR028169">
    <property type="entry name" value="Raftlin"/>
</dbReference>
<dbReference type="PANTHER" id="PTHR17601:SF1">
    <property type="entry name" value="RAFTLIN-2"/>
    <property type="match status" value="1"/>
</dbReference>
<dbReference type="PANTHER" id="PTHR17601">
    <property type="entry name" value="RAFTLIN-RELATED"/>
    <property type="match status" value="1"/>
</dbReference>
<dbReference type="Pfam" id="PF15250">
    <property type="entry name" value="Raftlin"/>
    <property type="match status" value="1"/>
</dbReference>
<keyword id="KW-1003">Cell membrane</keyword>
<keyword id="KW-0449">Lipoprotein</keyword>
<keyword id="KW-0472">Membrane</keyword>
<keyword id="KW-0519">Myristate</keyword>
<keyword id="KW-0564">Palmitate</keyword>
<keyword id="KW-0597">Phosphoprotein</keyword>
<keyword id="KW-1185">Reference proteome</keyword>
<organism>
    <name type="scientific">Pongo abelii</name>
    <name type="common">Sumatran orangutan</name>
    <name type="synonym">Pongo pygmaeus abelii</name>
    <dbReference type="NCBI Taxonomy" id="9601"/>
    <lineage>
        <taxon>Eukaryota</taxon>
        <taxon>Metazoa</taxon>
        <taxon>Chordata</taxon>
        <taxon>Craniata</taxon>
        <taxon>Vertebrata</taxon>
        <taxon>Euteleostomi</taxon>
        <taxon>Mammalia</taxon>
        <taxon>Eutheria</taxon>
        <taxon>Euarchontoglires</taxon>
        <taxon>Primates</taxon>
        <taxon>Haplorrhini</taxon>
        <taxon>Catarrhini</taxon>
        <taxon>Hominidae</taxon>
        <taxon>Pongo</taxon>
    </lineage>
</organism>
<protein>
    <recommendedName>
        <fullName>Raftlin-2</fullName>
    </recommendedName>
    <alternativeName>
        <fullName>Raft-linking protein 2</fullName>
    </alternativeName>
</protein>
<comment type="function">
    <text evidence="3">Upon bacterial lipopolysaccharide stimulation, mediates clathrin-dependent internalization of TLR4 in dendritic cells, resulting in activation of TICAM1-mediated signaling and subsequent IFNB1 production. May regulate B-cell antigen receptor mediated-signaling.</text>
</comment>
<comment type="subcellular location">
    <subcellularLocation>
        <location evidence="2">Cell membrane</location>
        <topology evidence="2">Lipid-anchor</topology>
    </subcellularLocation>
</comment>
<comment type="similarity">
    <text evidence="5">Belongs to the raftlin family.</text>
</comment>
<feature type="initiator methionine" description="Removed">
    <location>
        <position position="1"/>
    </location>
</feature>
<feature type="chain" id="PRO_0000089340" description="Raftlin-2">
    <location>
        <begin position="2"/>
        <end position="501"/>
    </location>
</feature>
<feature type="region of interest" description="Disordered" evidence="4">
    <location>
        <begin position="1"/>
        <end position="20"/>
    </location>
</feature>
<feature type="region of interest" description="Disordered" evidence="4">
    <location>
        <begin position="196"/>
        <end position="238"/>
    </location>
</feature>
<feature type="region of interest" description="Disordered" evidence="4">
    <location>
        <begin position="407"/>
        <end position="454"/>
    </location>
</feature>
<feature type="compositionally biased region" description="Polar residues" evidence="4">
    <location>
        <begin position="224"/>
        <end position="233"/>
    </location>
</feature>
<feature type="compositionally biased region" description="Basic and acidic residues" evidence="4">
    <location>
        <begin position="410"/>
        <end position="425"/>
    </location>
</feature>
<feature type="compositionally biased region" description="Polar residues" evidence="4">
    <location>
        <begin position="427"/>
        <end position="440"/>
    </location>
</feature>
<feature type="compositionally biased region" description="Basic and acidic residues" evidence="4">
    <location>
        <begin position="442"/>
        <end position="451"/>
    </location>
</feature>
<feature type="modified residue" description="Phosphoserine" evidence="3">
    <location>
        <position position="405"/>
    </location>
</feature>
<feature type="modified residue" description="Phosphothreonine" evidence="3">
    <location>
        <position position="409"/>
    </location>
</feature>
<feature type="modified residue" description="Phosphoserine" evidence="3">
    <location>
        <position position="430"/>
    </location>
</feature>
<feature type="lipid moiety-binding region" description="N-myristoyl glycine" evidence="1">
    <location>
        <position position="2"/>
    </location>
</feature>
<feature type="lipid moiety-binding region" description="S-palmitoyl cysteine" evidence="1">
    <location>
        <position position="3"/>
    </location>
</feature>
<reference key="1">
    <citation type="submission" date="2004-11" db="EMBL/GenBank/DDBJ databases">
        <authorList>
            <consortium name="The German cDNA consortium"/>
        </authorList>
    </citation>
    <scope>NUCLEOTIDE SEQUENCE [LARGE SCALE MRNA]</scope>
    <source>
        <tissue>Brain cortex</tissue>
    </source>
</reference>
<evidence type="ECO:0000250" key="1"/>
<evidence type="ECO:0000250" key="2">
    <source>
        <dbReference type="UniProtKB" id="Q14699"/>
    </source>
</evidence>
<evidence type="ECO:0000250" key="3">
    <source>
        <dbReference type="UniProtKB" id="Q8CHX7"/>
    </source>
</evidence>
<evidence type="ECO:0000256" key="4">
    <source>
        <dbReference type="SAM" id="MobiDB-lite"/>
    </source>
</evidence>
<evidence type="ECO:0000305" key="5"/>
<sequence>MGCGLRKLEDPDDSSPGKIFSTLKRPQVETKTEFAYEYVLLDFTLQASSNPEVIKINSILDIVTKVEDYYLKGYIVGAIHPVIQPVGQRKHLPASCLYRVVLSRLKLSPKNSAAPSGQRRPRLVIEECPLTSEAQTNDAAKELIEKINFAAKRGMKFVGFISQPYSPYKFCNGTNHDGDIESMLHVRHSSDENCRSWNEGTLSGQSSESGIEEELHHESGQYPMEQNGSPSSSKSRKGEASDNKLYTVFNAFDDDSTSWTYQEGILSMKVTRKGSVISTLDADWLELTTFYYKQGLSLIDSFVFWETSKGEHLPKSLEGFFIYEEEGSGVPGSSRKGNDAIVVEQWTVIEGCEIKTDYGPLLHTLAEFGWLLTSVLPTPVLRHDSEGNLATKQIVFLQRPVMWNSAAQTTDKKASRRIKGEDKNKATSRSIGLDTTTPQPAESRHPPEECRLSPSRECWTKEGRLAQHNSFSGFSSSDSVLRELDDGQFDQEDGVTQVTCM</sequence>
<name>RFTN2_PONAB</name>
<proteinExistence type="evidence at transcript level"/>